<protein>
    <recommendedName>
        <fullName evidence="2">D-alanine--D-alanine ligase</fullName>
        <ecNumber evidence="2">6.3.2.4</ecNumber>
    </recommendedName>
    <alternativeName>
        <fullName evidence="2">D-Ala-D-Ala ligase</fullName>
    </alternativeName>
    <alternativeName>
        <fullName evidence="2">D-alanylalanine synthetase</fullName>
    </alternativeName>
</protein>
<proteinExistence type="inferred from homology"/>
<reference key="1">
    <citation type="journal article" date="2007" name="ISME J.">
        <title>Population level functional diversity in a microbial community revealed by comparative genomic and metagenomic analyses.</title>
        <authorList>
            <person name="Bhaya D."/>
            <person name="Grossman A.R."/>
            <person name="Steunou A.-S."/>
            <person name="Khuri N."/>
            <person name="Cohan F.M."/>
            <person name="Hamamura N."/>
            <person name="Melendrez M.C."/>
            <person name="Bateson M.M."/>
            <person name="Ward D.M."/>
            <person name="Heidelberg J.F."/>
        </authorList>
    </citation>
    <scope>NUCLEOTIDE SEQUENCE [LARGE SCALE GENOMIC DNA]</scope>
    <source>
        <strain>JA-2-3B'a(2-13)</strain>
    </source>
</reference>
<evidence type="ECO:0000250" key="1"/>
<evidence type="ECO:0000255" key="2">
    <source>
        <dbReference type="HAMAP-Rule" id="MF_00047"/>
    </source>
</evidence>
<name>DDL_SYNJB</name>
<comment type="function">
    <text evidence="2">Cell wall formation.</text>
</comment>
<comment type="catalytic activity">
    <reaction evidence="2">
        <text>2 D-alanine + ATP = D-alanyl-D-alanine + ADP + phosphate + H(+)</text>
        <dbReference type="Rhea" id="RHEA:11224"/>
        <dbReference type="ChEBI" id="CHEBI:15378"/>
        <dbReference type="ChEBI" id="CHEBI:30616"/>
        <dbReference type="ChEBI" id="CHEBI:43474"/>
        <dbReference type="ChEBI" id="CHEBI:57416"/>
        <dbReference type="ChEBI" id="CHEBI:57822"/>
        <dbReference type="ChEBI" id="CHEBI:456216"/>
        <dbReference type="EC" id="6.3.2.4"/>
    </reaction>
</comment>
<comment type="cofactor">
    <cofactor evidence="1">
        <name>Mg(2+)</name>
        <dbReference type="ChEBI" id="CHEBI:18420"/>
    </cofactor>
    <cofactor evidence="1">
        <name>Mn(2+)</name>
        <dbReference type="ChEBI" id="CHEBI:29035"/>
    </cofactor>
    <text evidence="1">Binds 2 magnesium or manganese ions per subunit.</text>
</comment>
<comment type="pathway">
    <text evidence="2">Cell wall biogenesis; peptidoglycan biosynthesis.</text>
</comment>
<comment type="subcellular location">
    <subcellularLocation>
        <location evidence="2">Cytoplasm</location>
    </subcellularLocation>
</comment>
<comment type="similarity">
    <text evidence="2">Belongs to the D-alanine--D-alanine ligase family.</text>
</comment>
<sequence>MNIVVLAGGRSAERQVSWVTGKACKRALEDLGHRVKVIDPDEDLPLRLWQERQAGCDFVWIALHGPGGEDGVVQGMLDWLGLPYQGSGPLASALAMDKLVSKQIFRAAGIPTPDWQVWDDQNPLTWADCAAELGSPLVIKPSNNGSTVGISIVRDERSFAQGLELARSVSSRIFLERYVPGKEITLSILSGQVLPAIEIIPAQGDFYDYEAKYAPGGSRHLIPCSLSPAGLARCEAAGLKAYQALGCEGLARVDLRVDPEENPWVLEVNTLPGMTPTSLCPDAAAALGWTFTELVERMLQDALQKAQLTGSRHPQSSSATLGNAP</sequence>
<gene>
    <name evidence="2" type="primary">ddl</name>
    <name type="ordered locus">CYB_2109</name>
</gene>
<feature type="chain" id="PRO_1000030510" description="D-alanine--D-alanine ligase">
    <location>
        <begin position="1"/>
        <end position="325"/>
    </location>
</feature>
<feature type="domain" description="ATP-grasp" evidence="2">
    <location>
        <begin position="102"/>
        <end position="300"/>
    </location>
</feature>
<feature type="binding site" evidence="2">
    <location>
        <begin position="130"/>
        <end position="185"/>
    </location>
    <ligand>
        <name>ATP</name>
        <dbReference type="ChEBI" id="CHEBI:30616"/>
    </ligand>
</feature>
<feature type="binding site" evidence="2">
    <location>
        <position position="254"/>
    </location>
    <ligand>
        <name>Mg(2+)</name>
        <dbReference type="ChEBI" id="CHEBI:18420"/>
        <label>1</label>
    </ligand>
</feature>
<feature type="binding site" evidence="2">
    <location>
        <position position="267"/>
    </location>
    <ligand>
        <name>Mg(2+)</name>
        <dbReference type="ChEBI" id="CHEBI:18420"/>
        <label>1</label>
    </ligand>
</feature>
<feature type="binding site" evidence="2">
    <location>
        <position position="267"/>
    </location>
    <ligand>
        <name>Mg(2+)</name>
        <dbReference type="ChEBI" id="CHEBI:18420"/>
        <label>2</label>
    </ligand>
</feature>
<feature type="binding site" evidence="2">
    <location>
        <position position="269"/>
    </location>
    <ligand>
        <name>Mg(2+)</name>
        <dbReference type="ChEBI" id="CHEBI:18420"/>
        <label>2</label>
    </ligand>
</feature>
<accession>Q2JJV2</accession>
<dbReference type="EC" id="6.3.2.4" evidence="2"/>
<dbReference type="EMBL" id="CP000240">
    <property type="protein sequence ID" value="ABD03055.1"/>
    <property type="molecule type" value="Genomic_DNA"/>
</dbReference>
<dbReference type="RefSeq" id="WP_011433690.1">
    <property type="nucleotide sequence ID" value="NC_007776.1"/>
</dbReference>
<dbReference type="SMR" id="Q2JJV2"/>
<dbReference type="STRING" id="321332.CYB_2109"/>
<dbReference type="KEGG" id="cyb:CYB_2109"/>
<dbReference type="eggNOG" id="COG1181">
    <property type="taxonomic scope" value="Bacteria"/>
</dbReference>
<dbReference type="HOGENOM" id="CLU_039268_2_0_3"/>
<dbReference type="OrthoDB" id="9813261at2"/>
<dbReference type="UniPathway" id="UPA00219"/>
<dbReference type="Proteomes" id="UP000001938">
    <property type="component" value="Chromosome"/>
</dbReference>
<dbReference type="GO" id="GO:0005737">
    <property type="term" value="C:cytoplasm"/>
    <property type="evidence" value="ECO:0007669"/>
    <property type="project" value="UniProtKB-SubCell"/>
</dbReference>
<dbReference type="GO" id="GO:0005524">
    <property type="term" value="F:ATP binding"/>
    <property type="evidence" value="ECO:0007669"/>
    <property type="project" value="UniProtKB-KW"/>
</dbReference>
<dbReference type="GO" id="GO:0008716">
    <property type="term" value="F:D-alanine-D-alanine ligase activity"/>
    <property type="evidence" value="ECO:0007669"/>
    <property type="project" value="UniProtKB-UniRule"/>
</dbReference>
<dbReference type="GO" id="GO:0046872">
    <property type="term" value="F:metal ion binding"/>
    <property type="evidence" value="ECO:0007669"/>
    <property type="project" value="UniProtKB-KW"/>
</dbReference>
<dbReference type="GO" id="GO:0071555">
    <property type="term" value="P:cell wall organization"/>
    <property type="evidence" value="ECO:0007669"/>
    <property type="project" value="UniProtKB-KW"/>
</dbReference>
<dbReference type="GO" id="GO:0009252">
    <property type="term" value="P:peptidoglycan biosynthetic process"/>
    <property type="evidence" value="ECO:0007669"/>
    <property type="project" value="UniProtKB-UniRule"/>
</dbReference>
<dbReference type="GO" id="GO:0008360">
    <property type="term" value="P:regulation of cell shape"/>
    <property type="evidence" value="ECO:0007669"/>
    <property type="project" value="UniProtKB-KW"/>
</dbReference>
<dbReference type="Gene3D" id="3.40.50.20">
    <property type="match status" value="1"/>
</dbReference>
<dbReference type="Gene3D" id="3.30.1490.20">
    <property type="entry name" value="ATP-grasp fold, A domain"/>
    <property type="match status" value="1"/>
</dbReference>
<dbReference type="Gene3D" id="3.30.470.20">
    <property type="entry name" value="ATP-grasp fold, B domain"/>
    <property type="match status" value="1"/>
</dbReference>
<dbReference type="HAMAP" id="MF_00047">
    <property type="entry name" value="Dala_Dala_lig"/>
    <property type="match status" value="1"/>
</dbReference>
<dbReference type="InterPro" id="IPR011761">
    <property type="entry name" value="ATP-grasp"/>
</dbReference>
<dbReference type="InterPro" id="IPR013815">
    <property type="entry name" value="ATP_grasp_subdomain_1"/>
</dbReference>
<dbReference type="InterPro" id="IPR000291">
    <property type="entry name" value="D-Ala_lig_Van_CS"/>
</dbReference>
<dbReference type="InterPro" id="IPR005905">
    <property type="entry name" value="D_ala_D_ala"/>
</dbReference>
<dbReference type="InterPro" id="IPR011095">
    <property type="entry name" value="Dala_Dala_lig_C"/>
</dbReference>
<dbReference type="InterPro" id="IPR011127">
    <property type="entry name" value="Dala_Dala_lig_N"/>
</dbReference>
<dbReference type="InterPro" id="IPR016185">
    <property type="entry name" value="PreATP-grasp_dom_sf"/>
</dbReference>
<dbReference type="NCBIfam" id="TIGR01205">
    <property type="entry name" value="D_ala_D_alaTIGR"/>
    <property type="match status" value="1"/>
</dbReference>
<dbReference type="NCBIfam" id="NF002378">
    <property type="entry name" value="PRK01372.1"/>
    <property type="match status" value="1"/>
</dbReference>
<dbReference type="PANTHER" id="PTHR23132">
    <property type="entry name" value="D-ALANINE--D-ALANINE LIGASE"/>
    <property type="match status" value="1"/>
</dbReference>
<dbReference type="PANTHER" id="PTHR23132:SF23">
    <property type="entry name" value="D-ALANINE--D-ALANINE LIGASE B"/>
    <property type="match status" value="1"/>
</dbReference>
<dbReference type="Pfam" id="PF07478">
    <property type="entry name" value="Dala_Dala_lig_C"/>
    <property type="match status" value="1"/>
</dbReference>
<dbReference type="Pfam" id="PF01820">
    <property type="entry name" value="Dala_Dala_lig_N"/>
    <property type="match status" value="1"/>
</dbReference>
<dbReference type="PIRSF" id="PIRSF039102">
    <property type="entry name" value="Ddl/VanB"/>
    <property type="match status" value="1"/>
</dbReference>
<dbReference type="SUPFAM" id="SSF56059">
    <property type="entry name" value="Glutathione synthetase ATP-binding domain-like"/>
    <property type="match status" value="1"/>
</dbReference>
<dbReference type="SUPFAM" id="SSF52440">
    <property type="entry name" value="PreATP-grasp domain"/>
    <property type="match status" value="1"/>
</dbReference>
<dbReference type="PROSITE" id="PS50975">
    <property type="entry name" value="ATP_GRASP"/>
    <property type="match status" value="1"/>
</dbReference>
<dbReference type="PROSITE" id="PS00843">
    <property type="entry name" value="DALA_DALA_LIGASE_1"/>
    <property type="match status" value="1"/>
</dbReference>
<dbReference type="PROSITE" id="PS00844">
    <property type="entry name" value="DALA_DALA_LIGASE_2"/>
    <property type="match status" value="1"/>
</dbReference>
<keyword id="KW-0067">ATP-binding</keyword>
<keyword id="KW-0133">Cell shape</keyword>
<keyword id="KW-0961">Cell wall biogenesis/degradation</keyword>
<keyword id="KW-0963">Cytoplasm</keyword>
<keyword id="KW-0436">Ligase</keyword>
<keyword id="KW-0460">Magnesium</keyword>
<keyword id="KW-0464">Manganese</keyword>
<keyword id="KW-0479">Metal-binding</keyword>
<keyword id="KW-0547">Nucleotide-binding</keyword>
<keyword id="KW-0573">Peptidoglycan synthesis</keyword>
<keyword id="KW-1185">Reference proteome</keyword>
<organism>
    <name type="scientific">Synechococcus sp. (strain JA-2-3B'a(2-13))</name>
    <name type="common">Cyanobacteria bacterium Yellowstone B-Prime</name>
    <dbReference type="NCBI Taxonomy" id="321332"/>
    <lineage>
        <taxon>Bacteria</taxon>
        <taxon>Bacillati</taxon>
        <taxon>Cyanobacteriota</taxon>
        <taxon>Cyanophyceae</taxon>
        <taxon>Synechococcales</taxon>
        <taxon>Synechococcaceae</taxon>
        <taxon>Synechococcus</taxon>
    </lineage>
</organism>